<organism>
    <name type="scientific">Aureobasidium pullulans</name>
    <name type="common">Black yeast</name>
    <name type="synonym">Pullularia pullulans</name>
    <dbReference type="NCBI Taxonomy" id="5580"/>
    <lineage>
        <taxon>Eukaryota</taxon>
        <taxon>Fungi</taxon>
        <taxon>Dikarya</taxon>
        <taxon>Ascomycota</taxon>
        <taxon>Pezizomycotina</taxon>
        <taxon>Dothideomycetes</taxon>
        <taxon>Dothideomycetidae</taxon>
        <taxon>Dothideales</taxon>
        <taxon>Saccotheciaceae</taxon>
        <taxon>Aureobasidium</taxon>
    </lineage>
</organism>
<proteinExistence type="evidence at protein level"/>
<keyword id="KW-0119">Carbohydrate metabolism</keyword>
<keyword id="KW-0903">Direct protein sequencing</keyword>
<keyword id="KW-1015">Disulfide bond</keyword>
<keyword id="KW-0325">Glycoprotein</keyword>
<keyword id="KW-0326">Glycosidase</keyword>
<keyword id="KW-0378">Hydrolase</keyword>
<keyword id="KW-0624">Polysaccharide degradation</keyword>
<keyword id="KW-0964">Secreted</keyword>
<keyword id="KW-0732">Signal</keyword>
<keyword id="KW-0858">Xylan degradation</keyword>
<evidence type="ECO:0000250" key="1"/>
<evidence type="ECO:0000255" key="2"/>
<evidence type="ECO:0000255" key="3">
    <source>
        <dbReference type="PROSITE-ProRule" id="PRU01096"/>
    </source>
</evidence>
<evidence type="ECO:0000269" key="4">
    <source>
    </source>
</evidence>
<evidence type="ECO:0000305" key="5"/>
<protein>
    <recommendedName>
        <fullName>Endo-1,4-beta-xylanase 2</fullName>
        <shortName>Xylanase 2</shortName>
        <ecNumber>3.2.1.8</ecNumber>
    </recommendedName>
    <alternativeName>
        <fullName>1,4-beta-D-xylan xylanohydrolase 2</fullName>
    </alternativeName>
</protein>
<sequence>MHFSTITAALALLGLGAATPTDYSTSSYSKNQGLAQAWTSKGRQYIGTALTIRDDPVEQGIIQSRTDFNSITPENAMKWESTEPQRNNFTFAGADAVADFADRYNKEMRCHTLVWHSQLPAWVSQGNFDNKTLISIMENHIKKVAGRYKNKCTHWDVVNEALNEDGTYRSSVFYNTIGEAFIPIAFRFAEKYAGSKTKLYYNDYNLEYGSAKALGAQRILKLVQSYGVQIDGVGLQAHLSSEATASTGGGVTPDVQTLTNVLKLYTDLGVEVAYTELDVRFTTPATDAKLKAQADAYARVVQSCINVKRCVGITVWGVSDKYSWIPGVFPTEGAALLWDENFNKKPAYSSVLKTIQSFRKS</sequence>
<feature type="signal peptide" evidence="4">
    <location>
        <begin position="1"/>
        <end position="26"/>
    </location>
</feature>
<feature type="chain" id="PRO_5000052217" description="Endo-1,4-beta-xylanase 2">
    <location>
        <begin position="27"/>
        <end position="361"/>
    </location>
</feature>
<feature type="domain" description="GH10" evidence="3">
    <location>
        <begin position="46"/>
        <end position="354"/>
    </location>
</feature>
<feature type="active site" description="Proton donor" evidence="1">
    <location>
        <position position="160"/>
    </location>
</feature>
<feature type="active site" description="Nucleophile" evidence="1">
    <location>
        <position position="276"/>
    </location>
</feature>
<feature type="glycosylation site" description="N-linked (GlcNAc...) asparagine" evidence="2">
    <location>
        <position position="88"/>
    </location>
</feature>
<feature type="glycosylation site" description="N-linked (GlcNAc...) asparagine" evidence="2">
    <location>
        <position position="130"/>
    </location>
</feature>
<feature type="disulfide bond" evidence="1">
    <location>
        <begin position="304"/>
        <end position="310"/>
    </location>
</feature>
<reference key="1">
    <citation type="journal article" date="2006" name="Appl. Microbiol. Biotechnol.">
        <title>Purification and properties of a family-10 xylanase from Aureobasidium pullulans ATCC 20524 and characterization of the encoding gene.</title>
        <authorList>
            <person name="Tanaka H."/>
            <person name="Muguruma M."/>
            <person name="Ohta K."/>
        </authorList>
    </citation>
    <scope>NUCLEOTIDE SEQUENCE [GENOMIC DNA]</scope>
    <scope>PROTEIN SEQUENCE OF 27-43; 75-84 AND 277-286</scope>
    <scope>SUBCELLULAR LOCATION</scope>
    <scope>FUNCTION</scope>
    <scope>CATALYTIC ACTIVITY</scope>
    <scope>BIOPHYSICOCHEMICAL PROPERTIES</scope>
    <source>
        <strain>ATCC 20524</strain>
    </source>
</reference>
<accession>Q2PGV8</accession>
<name>XYN2_AURPU</name>
<gene>
    <name type="primary">xynII</name>
</gene>
<comment type="function">
    <text evidence="4">Endo-1,4-beta-xylanase involved in the hydrolysis of xylan, a major structural heterogeneous polysaccharide found in plant biomass representing the second most abundant polysaccharide in the biosphere, after cellulose. Hydrolyzes birch-wood xylan, with a similar activity toward oat-spelt xylan. Also shows weak activities toward pNP-beta-D-cellobioside and pNP-beta-D-xylopyranoside, but no detectable activity toward carboxymethyl cellulose and pNP-beta-L-arabinofuranoside.-.</text>
</comment>
<comment type="catalytic activity">
    <reaction evidence="4">
        <text>Endohydrolysis of (1-&gt;4)-beta-D-xylosidic linkages in xylans.</text>
        <dbReference type="EC" id="3.2.1.8"/>
    </reaction>
</comment>
<comment type="biophysicochemical properties">
    <phDependence>
        <text evidence="4">Optimum pH is 6.0.</text>
    </phDependence>
    <temperatureDependence>
        <text evidence="4">Optimum temperature is 70 degrees Celsius.</text>
    </temperatureDependence>
</comment>
<comment type="pathway">
    <text>Glycan degradation; xylan degradation.</text>
</comment>
<comment type="subcellular location">
    <subcellularLocation>
        <location evidence="4">Secreted</location>
    </subcellularLocation>
</comment>
<comment type="similarity">
    <text evidence="5">Belongs to the glycosyl hydrolase 10 (cellulase F) family.</text>
</comment>
<dbReference type="EC" id="3.2.1.8"/>
<dbReference type="EMBL" id="AB201542">
    <property type="protein sequence ID" value="BAE71410.1"/>
    <property type="molecule type" value="Genomic_DNA"/>
</dbReference>
<dbReference type="SMR" id="Q2PGV8"/>
<dbReference type="CAZy" id="GH10">
    <property type="family name" value="Glycoside Hydrolase Family 10"/>
</dbReference>
<dbReference type="GlyCosmos" id="Q2PGV8">
    <property type="glycosylation" value="2 sites, No reported glycans"/>
</dbReference>
<dbReference type="UniPathway" id="UPA00114"/>
<dbReference type="GO" id="GO:0005576">
    <property type="term" value="C:extracellular region"/>
    <property type="evidence" value="ECO:0007669"/>
    <property type="project" value="UniProtKB-SubCell"/>
</dbReference>
<dbReference type="GO" id="GO:0031176">
    <property type="term" value="F:endo-1,4-beta-xylanase activity"/>
    <property type="evidence" value="ECO:0007669"/>
    <property type="project" value="UniProtKB-EC"/>
</dbReference>
<dbReference type="GO" id="GO:0045493">
    <property type="term" value="P:xylan catabolic process"/>
    <property type="evidence" value="ECO:0007669"/>
    <property type="project" value="UniProtKB-UniPathway"/>
</dbReference>
<dbReference type="Gene3D" id="3.20.20.80">
    <property type="entry name" value="Glycosidases"/>
    <property type="match status" value="1"/>
</dbReference>
<dbReference type="InterPro" id="IPR044846">
    <property type="entry name" value="GH10"/>
</dbReference>
<dbReference type="InterPro" id="IPR001000">
    <property type="entry name" value="GH10_dom"/>
</dbReference>
<dbReference type="InterPro" id="IPR017853">
    <property type="entry name" value="Glycoside_hydrolase_SF"/>
</dbReference>
<dbReference type="PANTHER" id="PTHR31490:SF35">
    <property type="entry name" value="ENDO-1,4-BETA-XYLANASE"/>
    <property type="match status" value="1"/>
</dbReference>
<dbReference type="PANTHER" id="PTHR31490">
    <property type="entry name" value="GLYCOSYL HYDROLASE"/>
    <property type="match status" value="1"/>
</dbReference>
<dbReference type="Pfam" id="PF00331">
    <property type="entry name" value="Glyco_hydro_10"/>
    <property type="match status" value="1"/>
</dbReference>
<dbReference type="PRINTS" id="PR00134">
    <property type="entry name" value="GLHYDRLASE10"/>
</dbReference>
<dbReference type="SMART" id="SM00633">
    <property type="entry name" value="Glyco_10"/>
    <property type="match status" value="1"/>
</dbReference>
<dbReference type="SUPFAM" id="SSF51445">
    <property type="entry name" value="(Trans)glycosidases"/>
    <property type="match status" value="1"/>
</dbReference>
<dbReference type="PROSITE" id="PS51760">
    <property type="entry name" value="GH10_2"/>
    <property type="match status" value="1"/>
</dbReference>